<name>EFTS_SYNR3</name>
<dbReference type="EMBL" id="CT978603">
    <property type="protein sequence ID" value="CAK28176.1"/>
    <property type="molecule type" value="Genomic_DNA"/>
</dbReference>
<dbReference type="SMR" id="A5GTG7"/>
<dbReference type="STRING" id="316278.SynRCC307_1273"/>
<dbReference type="KEGG" id="syr:SynRCC307_1273"/>
<dbReference type="eggNOG" id="COG0264">
    <property type="taxonomic scope" value="Bacteria"/>
</dbReference>
<dbReference type="HOGENOM" id="CLU_047155_1_1_3"/>
<dbReference type="OrthoDB" id="9808348at2"/>
<dbReference type="Proteomes" id="UP000001115">
    <property type="component" value="Chromosome"/>
</dbReference>
<dbReference type="GO" id="GO:0005737">
    <property type="term" value="C:cytoplasm"/>
    <property type="evidence" value="ECO:0007669"/>
    <property type="project" value="UniProtKB-SubCell"/>
</dbReference>
<dbReference type="GO" id="GO:0003746">
    <property type="term" value="F:translation elongation factor activity"/>
    <property type="evidence" value="ECO:0007669"/>
    <property type="project" value="UniProtKB-UniRule"/>
</dbReference>
<dbReference type="CDD" id="cd14275">
    <property type="entry name" value="UBA_EF-Ts"/>
    <property type="match status" value="1"/>
</dbReference>
<dbReference type="FunFam" id="1.10.286.20:FF:000001">
    <property type="entry name" value="Elongation factor Ts"/>
    <property type="match status" value="1"/>
</dbReference>
<dbReference type="FunFam" id="1.10.8.10:FF:000001">
    <property type="entry name" value="Elongation factor Ts"/>
    <property type="match status" value="1"/>
</dbReference>
<dbReference type="Gene3D" id="1.10.286.20">
    <property type="match status" value="1"/>
</dbReference>
<dbReference type="Gene3D" id="1.10.8.10">
    <property type="entry name" value="DNA helicase RuvA subunit, C-terminal domain"/>
    <property type="match status" value="1"/>
</dbReference>
<dbReference type="Gene3D" id="3.30.479.20">
    <property type="entry name" value="Elongation factor Ts, dimerisation domain"/>
    <property type="match status" value="1"/>
</dbReference>
<dbReference type="HAMAP" id="MF_00050">
    <property type="entry name" value="EF_Ts"/>
    <property type="match status" value="1"/>
</dbReference>
<dbReference type="InterPro" id="IPR036402">
    <property type="entry name" value="EF-Ts_dimer_sf"/>
</dbReference>
<dbReference type="InterPro" id="IPR001816">
    <property type="entry name" value="Transl_elong_EFTs/EF1B"/>
</dbReference>
<dbReference type="InterPro" id="IPR014039">
    <property type="entry name" value="Transl_elong_EFTs/EF1B_dimer"/>
</dbReference>
<dbReference type="InterPro" id="IPR018101">
    <property type="entry name" value="Transl_elong_Ts_CS"/>
</dbReference>
<dbReference type="InterPro" id="IPR009060">
    <property type="entry name" value="UBA-like_sf"/>
</dbReference>
<dbReference type="NCBIfam" id="TIGR00116">
    <property type="entry name" value="tsf"/>
    <property type="match status" value="2"/>
</dbReference>
<dbReference type="PANTHER" id="PTHR11741">
    <property type="entry name" value="ELONGATION FACTOR TS"/>
    <property type="match status" value="1"/>
</dbReference>
<dbReference type="PANTHER" id="PTHR11741:SF10">
    <property type="entry name" value="POLYPROTEIN OF EF-TS, CHLOROPLASTIC"/>
    <property type="match status" value="1"/>
</dbReference>
<dbReference type="Pfam" id="PF00889">
    <property type="entry name" value="EF_TS"/>
    <property type="match status" value="1"/>
</dbReference>
<dbReference type="SUPFAM" id="SSF54713">
    <property type="entry name" value="Elongation factor Ts (EF-Ts), dimerisation domain"/>
    <property type="match status" value="1"/>
</dbReference>
<dbReference type="SUPFAM" id="SSF46934">
    <property type="entry name" value="UBA-like"/>
    <property type="match status" value="1"/>
</dbReference>
<dbReference type="PROSITE" id="PS01126">
    <property type="entry name" value="EF_TS_1"/>
    <property type="match status" value="1"/>
</dbReference>
<dbReference type="PROSITE" id="PS01127">
    <property type="entry name" value="EF_TS_2"/>
    <property type="match status" value="1"/>
</dbReference>
<protein>
    <recommendedName>
        <fullName evidence="1">Elongation factor Ts</fullName>
        <shortName evidence="1">EF-Ts</shortName>
    </recommendedName>
</protein>
<evidence type="ECO:0000255" key="1">
    <source>
        <dbReference type="HAMAP-Rule" id="MF_00050"/>
    </source>
</evidence>
<comment type="function">
    <text evidence="1">Associates with the EF-Tu.GDP complex and induces the exchange of GDP to GTP. It remains bound to the aminoacyl-tRNA.EF-Tu.GTP complex up to the GTP hydrolysis stage on the ribosome.</text>
</comment>
<comment type="subcellular location">
    <subcellularLocation>
        <location evidence="1">Cytoplasm</location>
    </subcellularLocation>
</comment>
<comment type="similarity">
    <text evidence="1">Belongs to the EF-Ts family.</text>
</comment>
<reference key="1">
    <citation type="submission" date="2006-05" db="EMBL/GenBank/DDBJ databases">
        <authorList>
            <consortium name="Genoscope"/>
        </authorList>
    </citation>
    <scope>NUCLEOTIDE SEQUENCE [LARGE SCALE GENOMIC DNA]</scope>
    <source>
        <strain>RCC307</strain>
    </source>
</reference>
<sequence>MAEISAKLVKELRDQTGAGMMDCKKALNETSGDLTKATEWLRQKGIASAEKKAGRTAAEGAVGSYIHTGARVGVLVEVNCETDFVARGDAFQELVRNVAMQIAACPNVEFVTTDDIPADVKERETNIEMGRDDLGNKPEAMKAKIVEGRVNKRLKELALLEQPFIKDSSLSVAEMVKQLAGKIGENIQVRRFTRYTLGEGIEVKQEDFAAEVAAMTA</sequence>
<feature type="chain" id="PRO_1000006197" description="Elongation factor Ts">
    <location>
        <begin position="1"/>
        <end position="217"/>
    </location>
</feature>
<feature type="region of interest" description="Involved in Mg(2+) ion dislocation from EF-Tu" evidence="1">
    <location>
        <begin position="82"/>
        <end position="85"/>
    </location>
</feature>
<organism>
    <name type="scientific">Synechococcus sp. (strain RCC307)</name>
    <dbReference type="NCBI Taxonomy" id="316278"/>
    <lineage>
        <taxon>Bacteria</taxon>
        <taxon>Bacillati</taxon>
        <taxon>Cyanobacteriota</taxon>
        <taxon>Cyanophyceae</taxon>
        <taxon>Synechococcales</taxon>
        <taxon>Synechococcaceae</taxon>
        <taxon>Synechococcus</taxon>
    </lineage>
</organism>
<accession>A5GTG7</accession>
<proteinExistence type="inferred from homology"/>
<gene>
    <name evidence="1" type="primary">tsf</name>
    <name type="ordered locus">SynRCC307_1273</name>
</gene>
<keyword id="KW-0963">Cytoplasm</keyword>
<keyword id="KW-0251">Elongation factor</keyword>
<keyword id="KW-0648">Protein biosynthesis</keyword>
<keyword id="KW-1185">Reference proteome</keyword>